<gene>
    <name type="primary">Gen</name>
    <name type="ORF">GA10481</name>
</gene>
<sequence length="754" mass="85187">MGVKELWTVLTPHAERKPINELRGKKVAIDLAGWVCESLNVVDYFVHPRHHLKNLFFRTCYLIWEQVTPVFVLEGVAPKLKGQVIAKRNELQFRGVRPKDAATGTQTAAKVDKGRTRFNHVLKQCETLLLSMGIQCVQGPGEAEAYAAFLNKHGLVDGVISQDSDCFAYGAIRVYRNFSVSTQGAQAAAGGAVDIYDMREITSRMDFGQHKIIVMALLCGCDYCPDGIGGIGKDGVLKLFNKYKESEILDRLRNWRAETDKYNALEMRVDDKSICSNCGHIGRTQSHTKSGCSVCRTKRGCDKTLWKEQRLSIKAELILRRKALLAPEFPNEEIISEFLSEPPTIPNLNLGWRQPNLVKFIKQIGHLLQWPEIYCFQKFFPILTRWQVQQAARTNAIGRVELVQPVDIIKKRTVKGVASLELRWQDPSGSFQGLIPDKQISEFELEHPKGIEELYYTVEPLDMLEAAYPDLVASFLKSKEKPPKKATRKKKTDPLSAIENIPETLDKQKANPAKPKRVVKKKKAPTEQAQPSLQQFLRREKIGGTPVKDSLPQMAQLPQQCSTPITKFLPSDLESDCDAVEFDMSDVVNGIISNPNARPTVTRHEGRQLHYEALSDDLSMRLAQLSLRKDELQEEPLPPVAEHKRDLSLVEHLPQSKRLSLDDSFDLLVKGDLKKVPHLIQPIRTPVDRFKHQHRISEHLPQPAVEPAANVSYFFNQSSDNADAFEQLMNSSLGIQEQAEEDEEEEDDLVVISD</sequence>
<evidence type="ECO:0000250" key="1"/>
<evidence type="ECO:0000256" key="2">
    <source>
        <dbReference type="SAM" id="MobiDB-lite"/>
    </source>
</evidence>
<evidence type="ECO:0000305" key="3"/>
<protein>
    <recommendedName>
        <fullName>Flap endonuclease GEN</fullName>
        <ecNumber>3.1.-.-</ecNumber>
    </recommendedName>
    <alternativeName>
        <fullName>Flap structure-specific endonuclease GEN</fullName>
    </alternativeName>
    <alternativeName>
        <fullName>Xpg-like endonuclease</fullName>
    </alternativeName>
</protein>
<reference key="1">
    <citation type="journal article" date="2005" name="Genome Res.">
        <title>Comparative genome sequencing of Drosophila pseudoobscura: chromosomal, gene, and cis-element evolution.</title>
        <authorList>
            <person name="Richards S."/>
            <person name="Liu Y."/>
            <person name="Bettencourt B.R."/>
            <person name="Hradecky P."/>
            <person name="Letovsky S."/>
            <person name="Nielsen R."/>
            <person name="Thornton K."/>
            <person name="Hubisz M.J."/>
            <person name="Chen R."/>
            <person name="Meisel R.P."/>
            <person name="Couronne O."/>
            <person name="Hua S."/>
            <person name="Smith M.A."/>
            <person name="Zhang P."/>
            <person name="Liu J."/>
            <person name="Bussemaker H.J."/>
            <person name="van Batenburg M.F."/>
            <person name="Howells S.L."/>
            <person name="Scherer S.E."/>
            <person name="Sodergren E."/>
            <person name="Matthews B.B."/>
            <person name="Crosby M.A."/>
            <person name="Schroeder A.J."/>
            <person name="Ortiz-Barrientos D."/>
            <person name="Rives C.M."/>
            <person name="Metzker M.L."/>
            <person name="Muzny D.M."/>
            <person name="Scott G."/>
            <person name="Steffen D."/>
            <person name="Wheeler D.A."/>
            <person name="Worley K.C."/>
            <person name="Havlak P."/>
            <person name="Durbin K.J."/>
            <person name="Egan A."/>
            <person name="Gill R."/>
            <person name="Hume J."/>
            <person name="Morgan M.B."/>
            <person name="Miner G."/>
            <person name="Hamilton C."/>
            <person name="Huang Y."/>
            <person name="Waldron L."/>
            <person name="Verduzco D."/>
            <person name="Clerc-Blankenburg K.P."/>
            <person name="Dubchak I."/>
            <person name="Noor M.A.F."/>
            <person name="Anderson W."/>
            <person name="White K.P."/>
            <person name="Clark A.G."/>
            <person name="Schaeffer S.W."/>
            <person name="Gelbart W.M."/>
            <person name="Weinstock G.M."/>
            <person name="Gibbs R.A."/>
        </authorList>
    </citation>
    <scope>NUCLEOTIDE SEQUENCE [LARGE SCALE GENOMIC DNA]</scope>
    <source>
        <strain>MV2-25 / Tucson 14011-0121.94</strain>
    </source>
</reference>
<name>GEN_DROPS</name>
<proteinExistence type="inferred from homology"/>
<organism>
    <name type="scientific">Drosophila pseudoobscura pseudoobscura</name>
    <name type="common">Fruit fly</name>
    <dbReference type="NCBI Taxonomy" id="46245"/>
    <lineage>
        <taxon>Eukaryota</taxon>
        <taxon>Metazoa</taxon>
        <taxon>Ecdysozoa</taxon>
        <taxon>Arthropoda</taxon>
        <taxon>Hexapoda</taxon>
        <taxon>Insecta</taxon>
        <taxon>Pterygota</taxon>
        <taxon>Neoptera</taxon>
        <taxon>Endopterygota</taxon>
        <taxon>Diptera</taxon>
        <taxon>Brachycera</taxon>
        <taxon>Muscomorpha</taxon>
        <taxon>Ephydroidea</taxon>
        <taxon>Drosophilidae</taxon>
        <taxon>Drosophila</taxon>
        <taxon>Sophophora</taxon>
    </lineage>
</organism>
<comment type="function">
    <text evidence="1">Endonuclease which cleaves flap structures at the junction between single-stranded DNA and double-stranded DNA. Specific for 5'-overhanging flap structures in which the 5'-upstream of the flap is completely double-stranded. Prefers the blocked-flap structures similar to those occurring at replication forks, in which the 5' single-strand overhang of the flap is double-stranded. Also possesses weak 5'- to 3'-exonuclease activity on nicked but not gapped double-stranded DNA. Does not cleave bubble-like or Holliday junction substrates (By similarity).</text>
</comment>
<comment type="cofactor">
    <cofactor evidence="1">
        <name>Mg(2+)</name>
        <dbReference type="ChEBI" id="CHEBI:18420"/>
    </cofactor>
    <text evidence="1">Binds 2 magnesium ions per subunit. They probably participate in the reaction catalyzed by the enzyme. May bind an additional third magnesium ion after substrate binding.</text>
</comment>
<comment type="subcellular location">
    <subcellularLocation>
        <location evidence="1">Nucleus</location>
    </subcellularLocation>
</comment>
<comment type="similarity">
    <text evidence="3">Belongs to the XPG/RAD2 endonuclease family. GEN subfamily.</text>
</comment>
<dbReference type="EC" id="3.1.-.-"/>
<dbReference type="EMBL" id="CH379067">
    <property type="protein sequence ID" value="EAL31334.1"/>
    <property type="molecule type" value="Genomic_DNA"/>
</dbReference>
<dbReference type="RefSeq" id="XP_001354281.1">
    <property type="nucleotide sequence ID" value="XM_001354245.3"/>
</dbReference>
<dbReference type="SMR" id="Q29FC1"/>
<dbReference type="FunCoup" id="Q29FC1">
    <property type="interactions" value="852"/>
</dbReference>
<dbReference type="STRING" id="46245.Q29FC1"/>
<dbReference type="EnsemblMetazoa" id="FBtr0278182">
    <property type="protein sequence ID" value="FBpp0276620"/>
    <property type="gene ID" value="FBgn0070538"/>
</dbReference>
<dbReference type="GeneID" id="4814122"/>
<dbReference type="KEGG" id="dpo:4814122"/>
<dbReference type="CTD" id="38594"/>
<dbReference type="eggNOG" id="KOG2519">
    <property type="taxonomic scope" value="Eukaryota"/>
</dbReference>
<dbReference type="HOGENOM" id="CLU_013777_2_0_1"/>
<dbReference type="InParanoid" id="Q29FC1"/>
<dbReference type="OMA" id="RNLYFRT"/>
<dbReference type="PhylomeDB" id="Q29FC1"/>
<dbReference type="Proteomes" id="UP000001819">
    <property type="component" value="Chromosome X"/>
</dbReference>
<dbReference type="Bgee" id="FBgn0070538">
    <property type="expression patterns" value="Expressed in female reproductive system and 2 other cell types or tissues"/>
</dbReference>
<dbReference type="GO" id="GO:0005634">
    <property type="term" value="C:nucleus"/>
    <property type="evidence" value="ECO:0000250"/>
    <property type="project" value="UniProtKB"/>
</dbReference>
<dbReference type="GO" id="GO:0035312">
    <property type="term" value="F:5'-3' DNA exonuclease activity"/>
    <property type="evidence" value="ECO:0000250"/>
    <property type="project" value="UniProtKB"/>
</dbReference>
<dbReference type="GO" id="GO:0017108">
    <property type="term" value="F:5'-flap endonuclease activity"/>
    <property type="evidence" value="ECO:0007669"/>
    <property type="project" value="TreeGrafter"/>
</dbReference>
<dbReference type="GO" id="GO:0004520">
    <property type="term" value="F:DNA endonuclease activity"/>
    <property type="evidence" value="ECO:0000250"/>
    <property type="project" value="UniProtKB"/>
</dbReference>
<dbReference type="GO" id="GO:0008311">
    <property type="term" value="F:double-stranded DNA 3'-5' DNA exonuclease activity"/>
    <property type="evidence" value="ECO:0000250"/>
    <property type="project" value="UniProtKB"/>
</dbReference>
<dbReference type="GO" id="GO:0000400">
    <property type="term" value="F:four-way junction DNA binding"/>
    <property type="evidence" value="ECO:0007669"/>
    <property type="project" value="TreeGrafter"/>
</dbReference>
<dbReference type="GO" id="GO:0046872">
    <property type="term" value="F:metal ion binding"/>
    <property type="evidence" value="ECO:0007669"/>
    <property type="project" value="UniProtKB-KW"/>
</dbReference>
<dbReference type="GO" id="GO:0008310">
    <property type="term" value="F:single-stranded DNA 3'-5' DNA exonuclease activity"/>
    <property type="evidence" value="ECO:0000250"/>
    <property type="project" value="UniProtKB"/>
</dbReference>
<dbReference type="GO" id="GO:0006281">
    <property type="term" value="P:DNA repair"/>
    <property type="evidence" value="ECO:0007669"/>
    <property type="project" value="UniProtKB-KW"/>
</dbReference>
<dbReference type="CDD" id="cd09905">
    <property type="entry name" value="H3TH_GEN1"/>
    <property type="match status" value="1"/>
</dbReference>
<dbReference type="CDD" id="cd09869">
    <property type="entry name" value="PIN_GEN1"/>
    <property type="match status" value="1"/>
</dbReference>
<dbReference type="FunFam" id="3.40.50.1010:FF:000054">
    <property type="entry name" value="Flap endonuclease GEN"/>
    <property type="match status" value="1"/>
</dbReference>
<dbReference type="FunFam" id="1.10.150.20:FF:000030">
    <property type="entry name" value="Flap endonuclease GEN-like 1"/>
    <property type="match status" value="1"/>
</dbReference>
<dbReference type="Gene3D" id="1.10.150.20">
    <property type="entry name" value="5' to 3' exonuclease, C-terminal subdomain"/>
    <property type="match status" value="1"/>
</dbReference>
<dbReference type="Gene3D" id="3.40.50.1010">
    <property type="entry name" value="5'-nuclease"/>
    <property type="match status" value="1"/>
</dbReference>
<dbReference type="InterPro" id="IPR036279">
    <property type="entry name" value="5-3_exonuclease_C_sf"/>
</dbReference>
<dbReference type="InterPro" id="IPR041012">
    <property type="entry name" value="GEN_chromo"/>
</dbReference>
<dbReference type="InterPro" id="IPR008918">
    <property type="entry name" value="HhH2"/>
</dbReference>
<dbReference type="InterPro" id="IPR029060">
    <property type="entry name" value="PIN-like_dom_sf"/>
</dbReference>
<dbReference type="InterPro" id="IPR006086">
    <property type="entry name" value="XPG-I_dom"/>
</dbReference>
<dbReference type="InterPro" id="IPR006084">
    <property type="entry name" value="XPG/Rad2"/>
</dbReference>
<dbReference type="InterPro" id="IPR006085">
    <property type="entry name" value="XPG_DNA_repair_N"/>
</dbReference>
<dbReference type="PANTHER" id="PTHR11081">
    <property type="entry name" value="FLAP ENDONUCLEASE FAMILY MEMBER"/>
    <property type="match status" value="1"/>
</dbReference>
<dbReference type="PANTHER" id="PTHR11081:SF70">
    <property type="entry name" value="FLAP ENDONUCLEASE GEN HOMOLOG 1"/>
    <property type="match status" value="1"/>
</dbReference>
<dbReference type="Pfam" id="PF18704">
    <property type="entry name" value="Chromo_2"/>
    <property type="match status" value="1"/>
</dbReference>
<dbReference type="Pfam" id="PF00867">
    <property type="entry name" value="XPG_I"/>
    <property type="match status" value="1"/>
</dbReference>
<dbReference type="Pfam" id="PF00752">
    <property type="entry name" value="XPG_N"/>
    <property type="match status" value="1"/>
</dbReference>
<dbReference type="PRINTS" id="PR00853">
    <property type="entry name" value="XPGRADSUPER"/>
</dbReference>
<dbReference type="SMART" id="SM00279">
    <property type="entry name" value="HhH2"/>
    <property type="match status" value="1"/>
</dbReference>
<dbReference type="SMART" id="SM00484">
    <property type="entry name" value="XPGI"/>
    <property type="match status" value="1"/>
</dbReference>
<dbReference type="SMART" id="SM00485">
    <property type="entry name" value="XPGN"/>
    <property type="match status" value="1"/>
</dbReference>
<dbReference type="SUPFAM" id="SSF47807">
    <property type="entry name" value="5' to 3' exonuclease, C-terminal subdomain"/>
    <property type="match status" value="1"/>
</dbReference>
<dbReference type="SUPFAM" id="SSF88723">
    <property type="entry name" value="PIN domain-like"/>
    <property type="match status" value="1"/>
</dbReference>
<feature type="chain" id="PRO_0000314149" description="Flap endonuclease GEN">
    <location>
        <begin position="1"/>
        <end position="754"/>
    </location>
</feature>
<feature type="region of interest" description="N-domain">
    <location>
        <begin position="1"/>
        <end position="90"/>
    </location>
</feature>
<feature type="region of interest" description="I-domain">
    <location>
        <begin position="130"/>
        <end position="226"/>
    </location>
</feature>
<feature type="region of interest" description="Disordered" evidence="2">
    <location>
        <begin position="479"/>
        <end position="533"/>
    </location>
</feature>
<feature type="region of interest" description="Disordered" evidence="2">
    <location>
        <begin position="732"/>
        <end position="754"/>
    </location>
</feature>
<feature type="compositionally biased region" description="Basic residues" evidence="2">
    <location>
        <begin position="514"/>
        <end position="523"/>
    </location>
</feature>
<feature type="compositionally biased region" description="Acidic residues" evidence="2">
    <location>
        <begin position="738"/>
        <end position="754"/>
    </location>
</feature>
<feature type="binding site" evidence="1">
    <location>
        <position position="30"/>
    </location>
    <ligand>
        <name>Mg(2+)</name>
        <dbReference type="ChEBI" id="CHEBI:18420"/>
        <label>1</label>
    </ligand>
</feature>
<feature type="binding site" evidence="1">
    <location>
        <position position="74"/>
    </location>
    <ligand>
        <name>Mg(2+)</name>
        <dbReference type="ChEBI" id="CHEBI:18420"/>
        <label>1</label>
    </ligand>
</feature>
<feature type="binding site" evidence="1">
    <location>
        <position position="142"/>
    </location>
    <ligand>
        <name>Mg(2+)</name>
        <dbReference type="ChEBI" id="CHEBI:18420"/>
        <label>1</label>
    </ligand>
</feature>
<feature type="binding site" evidence="1">
    <location>
        <position position="144"/>
    </location>
    <ligand>
        <name>Mg(2+)</name>
        <dbReference type="ChEBI" id="CHEBI:18420"/>
        <label>1</label>
    </ligand>
</feature>
<feature type="binding site" evidence="1">
    <location>
        <position position="163"/>
    </location>
    <ligand>
        <name>Mg(2+)</name>
        <dbReference type="ChEBI" id="CHEBI:18420"/>
        <label>2</label>
    </ligand>
</feature>
<feature type="binding site" evidence="1">
    <location>
        <position position="165"/>
    </location>
    <ligand>
        <name>Mg(2+)</name>
        <dbReference type="ChEBI" id="CHEBI:18420"/>
        <label>2</label>
    </ligand>
</feature>
<feature type="binding site" evidence="1">
    <location>
        <position position="222"/>
    </location>
    <ligand>
        <name>Mg(2+)</name>
        <dbReference type="ChEBI" id="CHEBI:18420"/>
        <label>2</label>
    </ligand>
</feature>
<keyword id="KW-0227">DNA damage</keyword>
<keyword id="KW-0234">DNA repair</keyword>
<keyword id="KW-0255">Endonuclease</keyword>
<keyword id="KW-0269">Exonuclease</keyword>
<keyword id="KW-0378">Hydrolase</keyword>
<keyword id="KW-0460">Magnesium</keyword>
<keyword id="KW-0479">Metal-binding</keyword>
<keyword id="KW-0540">Nuclease</keyword>
<keyword id="KW-0539">Nucleus</keyword>
<keyword id="KW-1185">Reference proteome</keyword>
<accession>Q29FC1</accession>